<reference key="1">
    <citation type="submission" date="2008-04" db="EMBL/GenBank/DDBJ databases">
        <title>Complete sequence of Yersinia pseudotuberculosis PB1/+.</title>
        <authorList>
            <person name="Copeland A."/>
            <person name="Lucas S."/>
            <person name="Lapidus A."/>
            <person name="Glavina del Rio T."/>
            <person name="Dalin E."/>
            <person name="Tice H."/>
            <person name="Bruce D."/>
            <person name="Goodwin L."/>
            <person name="Pitluck S."/>
            <person name="Munk A.C."/>
            <person name="Brettin T."/>
            <person name="Detter J.C."/>
            <person name="Han C."/>
            <person name="Tapia R."/>
            <person name="Schmutz J."/>
            <person name="Larimer F."/>
            <person name="Land M."/>
            <person name="Hauser L."/>
            <person name="Challacombe J.F."/>
            <person name="Green L."/>
            <person name="Lindler L.E."/>
            <person name="Nikolich M.P."/>
            <person name="Richardson P."/>
        </authorList>
    </citation>
    <scope>NUCLEOTIDE SEQUENCE [LARGE SCALE GENOMIC DNA]</scope>
    <source>
        <strain>PB1/+</strain>
    </source>
</reference>
<dbReference type="EC" id="2.3.1.1" evidence="1"/>
<dbReference type="EMBL" id="CP001048">
    <property type="protein sequence ID" value="ACC90100.1"/>
    <property type="molecule type" value="Genomic_DNA"/>
</dbReference>
<dbReference type="RefSeq" id="WP_002211624.1">
    <property type="nucleotide sequence ID" value="NZ_CP009780.1"/>
</dbReference>
<dbReference type="SMR" id="B2JZ56"/>
<dbReference type="GeneID" id="96662393"/>
<dbReference type="KEGG" id="ypb:YPTS_3145"/>
<dbReference type="PATRIC" id="fig|502801.10.peg.2578"/>
<dbReference type="UniPathway" id="UPA00068">
    <property type="reaction ID" value="UER00106"/>
</dbReference>
<dbReference type="GO" id="GO:0005737">
    <property type="term" value="C:cytoplasm"/>
    <property type="evidence" value="ECO:0007669"/>
    <property type="project" value="UniProtKB-SubCell"/>
</dbReference>
<dbReference type="GO" id="GO:0004042">
    <property type="term" value="F:L-glutamate N-acetyltransferase activity"/>
    <property type="evidence" value="ECO:0007669"/>
    <property type="project" value="UniProtKB-UniRule"/>
</dbReference>
<dbReference type="GO" id="GO:0006526">
    <property type="term" value="P:L-arginine biosynthetic process"/>
    <property type="evidence" value="ECO:0007669"/>
    <property type="project" value="UniProtKB-UniRule"/>
</dbReference>
<dbReference type="CDD" id="cd04237">
    <property type="entry name" value="AAK_NAGS-ABP"/>
    <property type="match status" value="1"/>
</dbReference>
<dbReference type="CDD" id="cd04301">
    <property type="entry name" value="NAT_SF"/>
    <property type="match status" value="1"/>
</dbReference>
<dbReference type="FunFam" id="3.40.1160.10:FF:000005">
    <property type="entry name" value="Amino-acid acetyltransferase"/>
    <property type="match status" value="1"/>
</dbReference>
<dbReference type="FunFam" id="3.40.630.30:FF:000009">
    <property type="entry name" value="Amino-acid acetyltransferase"/>
    <property type="match status" value="1"/>
</dbReference>
<dbReference type="Gene3D" id="3.40.630.30">
    <property type="match status" value="1"/>
</dbReference>
<dbReference type="Gene3D" id="3.40.1160.10">
    <property type="entry name" value="Acetylglutamate kinase-like"/>
    <property type="match status" value="1"/>
</dbReference>
<dbReference type="HAMAP" id="MF_01105">
    <property type="entry name" value="N_acetyl_glu_synth"/>
    <property type="match status" value="1"/>
</dbReference>
<dbReference type="InterPro" id="IPR036393">
    <property type="entry name" value="AceGlu_kinase-like_sf"/>
</dbReference>
<dbReference type="InterPro" id="IPR016181">
    <property type="entry name" value="Acyl_CoA_acyltransferase"/>
</dbReference>
<dbReference type="InterPro" id="IPR001048">
    <property type="entry name" value="Asp/Glu/Uridylate_kinase"/>
</dbReference>
<dbReference type="InterPro" id="IPR000182">
    <property type="entry name" value="GNAT_dom"/>
</dbReference>
<dbReference type="InterPro" id="IPR033719">
    <property type="entry name" value="NAGS_kin"/>
</dbReference>
<dbReference type="InterPro" id="IPR010167">
    <property type="entry name" value="NH2A_AcTrfase"/>
</dbReference>
<dbReference type="NCBIfam" id="TIGR01890">
    <property type="entry name" value="N-Ac-Glu-synth"/>
    <property type="match status" value="1"/>
</dbReference>
<dbReference type="NCBIfam" id="NF003641">
    <property type="entry name" value="PRK05279.1"/>
    <property type="match status" value="1"/>
</dbReference>
<dbReference type="PANTHER" id="PTHR30602">
    <property type="entry name" value="AMINO-ACID ACETYLTRANSFERASE"/>
    <property type="match status" value="1"/>
</dbReference>
<dbReference type="PANTHER" id="PTHR30602:SF12">
    <property type="entry name" value="AMINO-ACID ACETYLTRANSFERASE NAGS1, CHLOROPLASTIC-RELATED"/>
    <property type="match status" value="1"/>
</dbReference>
<dbReference type="Pfam" id="PF00696">
    <property type="entry name" value="AA_kinase"/>
    <property type="match status" value="1"/>
</dbReference>
<dbReference type="Pfam" id="PF00583">
    <property type="entry name" value="Acetyltransf_1"/>
    <property type="match status" value="1"/>
</dbReference>
<dbReference type="PIRSF" id="PIRSF000423">
    <property type="entry name" value="ArgA"/>
    <property type="match status" value="1"/>
</dbReference>
<dbReference type="SUPFAM" id="SSF55729">
    <property type="entry name" value="Acyl-CoA N-acyltransferases (Nat)"/>
    <property type="match status" value="1"/>
</dbReference>
<dbReference type="SUPFAM" id="SSF53633">
    <property type="entry name" value="Carbamate kinase-like"/>
    <property type="match status" value="1"/>
</dbReference>
<dbReference type="PROSITE" id="PS51186">
    <property type="entry name" value="GNAT"/>
    <property type="match status" value="1"/>
</dbReference>
<proteinExistence type="inferred from homology"/>
<comment type="catalytic activity">
    <reaction evidence="1">
        <text>L-glutamate + acetyl-CoA = N-acetyl-L-glutamate + CoA + H(+)</text>
        <dbReference type="Rhea" id="RHEA:24292"/>
        <dbReference type="ChEBI" id="CHEBI:15378"/>
        <dbReference type="ChEBI" id="CHEBI:29985"/>
        <dbReference type="ChEBI" id="CHEBI:44337"/>
        <dbReference type="ChEBI" id="CHEBI:57287"/>
        <dbReference type="ChEBI" id="CHEBI:57288"/>
        <dbReference type="EC" id="2.3.1.1"/>
    </reaction>
</comment>
<comment type="pathway">
    <text evidence="1">Amino-acid biosynthesis; L-arginine biosynthesis; N(2)-acetyl-L-ornithine from L-glutamate: step 1/4.</text>
</comment>
<comment type="subunit">
    <text evidence="1">Homohexamer.</text>
</comment>
<comment type="subcellular location">
    <subcellularLocation>
        <location evidence="1">Cytoplasm</location>
    </subcellularLocation>
</comment>
<comment type="similarity">
    <text evidence="1">Belongs to the acetyltransferase family. ArgA subfamily.</text>
</comment>
<accession>B2JZ56</accession>
<organism>
    <name type="scientific">Yersinia pseudotuberculosis serotype IB (strain PB1/+)</name>
    <dbReference type="NCBI Taxonomy" id="502801"/>
    <lineage>
        <taxon>Bacteria</taxon>
        <taxon>Pseudomonadati</taxon>
        <taxon>Pseudomonadota</taxon>
        <taxon>Gammaproteobacteria</taxon>
        <taxon>Enterobacterales</taxon>
        <taxon>Yersiniaceae</taxon>
        <taxon>Yersinia</taxon>
    </lineage>
</organism>
<protein>
    <recommendedName>
        <fullName evidence="1">Amino-acid acetyltransferase</fullName>
        <ecNumber evidence="1">2.3.1.1</ecNumber>
    </recommendedName>
    <alternativeName>
        <fullName evidence="1">N-acetylglutamate synthase</fullName>
        <shortName evidence="1">AGS</shortName>
        <shortName evidence="1">NAGS</shortName>
    </alternativeName>
</protein>
<gene>
    <name evidence="1" type="primary">argA</name>
    <name type="ordered locus">YPTS_3145</name>
</gene>
<feature type="chain" id="PRO_1000137055" description="Amino-acid acetyltransferase">
    <location>
        <begin position="1"/>
        <end position="441"/>
    </location>
</feature>
<feature type="domain" description="N-acetyltransferase" evidence="1">
    <location>
        <begin position="295"/>
        <end position="434"/>
    </location>
</feature>
<keyword id="KW-0012">Acyltransferase</keyword>
<keyword id="KW-0028">Amino-acid biosynthesis</keyword>
<keyword id="KW-0055">Arginine biosynthesis</keyword>
<keyword id="KW-0963">Cytoplasm</keyword>
<keyword id="KW-0808">Transferase</keyword>
<sequence length="441" mass="49355">MKERSTELVQGFRHSVPYINAHRGKTFVVMLGGEAIEHENFSSIVNDIGLLHSLGIRLVVVYGARPQIDSNLADHNYEPIYHKHTRVTDARTLEMVKQAAGLLQLDITARLSMSLNNTPLQGAHINVVSGNFIIAQPLGVDDGVDYCHSGRIRRIDEEAIHRQLDNGAIVLLGPVAVSVTGESFNLTSEEVATQLAIKLKAEKMIGFCSSQGVTDSEGNIISELFPNDAQKRIEDLEQDGDYNSGTVRFLRGAVKACRSGVRRSHLLSYQEDGALIQELFSRDGIGTQIVMESAEQVRRATINDIGGILELIRPLEQQGILVRRSREQLEMEIDKFTIIERDNLTIACAALYPFPDEHIGEMACVAVHPDYRSSSRGEMLLNRITNQARQMGLKKLFVLTTRSIHWFQERGFTPAEVDVLPIQKQELYNYQRRSKILLADL</sequence>
<evidence type="ECO:0000255" key="1">
    <source>
        <dbReference type="HAMAP-Rule" id="MF_01105"/>
    </source>
</evidence>
<name>ARGA_YERPB</name>